<protein>
    <recommendedName>
        <fullName>Rhoptry neck protein 2-like protein 2</fullName>
    </recommendedName>
    <alternativeName>
        <fullName>Sporozoite-specific paralog of RON2</fullName>
        <shortName>SporoRON2</shortName>
    </alternativeName>
</protein>
<proteinExistence type="evidence at protein level"/>
<gene>
    <name type="primary">RON2L2</name>
    <name type="ORF">TGME49_065120</name>
</gene>
<dbReference type="EMBL" id="KE138832">
    <property type="protein sequence ID" value="EPT27750.1"/>
    <property type="molecule type" value="Genomic_DNA"/>
</dbReference>
<dbReference type="RefSeq" id="XP_018636309.1">
    <property type="nucleotide sequence ID" value="XM_018781392.1"/>
</dbReference>
<dbReference type="PDB" id="3ZLD">
    <property type="method" value="X-ray"/>
    <property type="resolution" value="3.10 A"/>
    <property type="chains" value="B=999-1034"/>
</dbReference>
<dbReference type="PDBsum" id="3ZLD"/>
<dbReference type="SMR" id="B6KLP1"/>
<dbReference type="EnsemblProtists" id="TGME49_265120-t26_1">
    <property type="protein sequence ID" value="TGME49_265120-t26_1"/>
    <property type="gene ID" value="TGME49_265120"/>
</dbReference>
<dbReference type="GeneID" id="7900663"/>
<dbReference type="KEGG" id="tgo:TGME49_265120"/>
<dbReference type="VEuPathDB" id="ToxoDB:TGME49_500398"/>
<dbReference type="HOGENOM" id="CLU_441151_0_0_1"/>
<dbReference type="OrthoDB" id="345453at2759"/>
<dbReference type="PhylomeDB" id="B6KLP1"/>
<dbReference type="Proteomes" id="UP000001529">
    <property type="component" value="Chromosome IX"/>
</dbReference>
<dbReference type="GO" id="GO:0005576">
    <property type="term" value="C:extracellular region"/>
    <property type="evidence" value="ECO:0007669"/>
    <property type="project" value="UniProtKB-SubCell"/>
</dbReference>
<dbReference type="GO" id="GO:0020002">
    <property type="term" value="C:host cell plasma membrane"/>
    <property type="evidence" value="ECO:0007669"/>
    <property type="project" value="UniProtKB-SubCell"/>
</dbReference>
<dbReference type="GO" id="GO:0016020">
    <property type="term" value="C:membrane"/>
    <property type="evidence" value="ECO:0007669"/>
    <property type="project" value="UniProtKB-KW"/>
</dbReference>
<keyword id="KW-0002">3D-structure</keyword>
<keyword id="KW-1015">Disulfide bond</keyword>
<keyword id="KW-1032">Host cell membrane</keyword>
<keyword id="KW-1043">Host membrane</keyword>
<keyword id="KW-0472">Membrane</keyword>
<keyword id="KW-1185">Reference proteome</keyword>
<keyword id="KW-0964">Secreted</keyword>
<keyword id="KW-0732">Signal</keyword>
<keyword id="KW-0812">Transmembrane</keyword>
<keyword id="KW-1133">Transmembrane helix</keyword>
<reference key="1">
    <citation type="submission" date="2008-06" db="EMBL/GenBank/DDBJ databases">
        <title>Annotation of Toxoplasma gondii ME49.</title>
        <authorList>
            <person name="Lorenzi H."/>
            <person name="Caler E."/>
            <person name="Galinsky K."/>
            <person name="Schobel S."/>
            <person name="Brunk B.P."/>
            <person name="Roos D.S."/>
            <person name="Paulsen I."/>
        </authorList>
    </citation>
    <scope>NUCLEOTIDE SEQUENCE [LARGE SCALE GENOMIC DNA]</scope>
    <source>
        <strain>ATCC 50611 / Me49</strain>
    </source>
</reference>
<reference key="2">
    <citation type="journal article" date="2012" name="PLoS ONE">
        <title>Proteomic analysis of fractionated Toxoplasma oocysts reveals clues to their environmental resistance.</title>
        <authorList>
            <person name="Fritz H.M."/>
            <person name="Bowyer P.W."/>
            <person name="Bogyo M."/>
            <person name="Conrad P.A."/>
            <person name="Boothroyd J.C."/>
        </authorList>
    </citation>
    <scope>IDENTIFICATION BY MASS SPECTROMETRY</scope>
    <scope>INDUCTION</scope>
</reference>
<reference key="3">
    <citation type="journal article" date="2012" name="PLoS ONE">
        <title>Transcriptomic analysis of toxoplasma development reveals many novel functions and structures specific to sporozoites and oocysts.</title>
        <authorList>
            <person name="Fritz H.M."/>
            <person name="Buchholz K.R."/>
            <person name="Chen X."/>
            <person name="Durbin-Johnson B."/>
            <person name="Rocke D.M."/>
            <person name="Conrad P.A."/>
            <person name="Boothroyd J.C."/>
        </authorList>
    </citation>
    <scope>INDUCTION</scope>
</reference>
<sequence>MSSNLAFLSLSLAESTASLGKSLEETRTRLTEKLKLVAGMALGFDQFAMHQTATGPGLSVEGKQTEQMSRKSAEDTRASSLSSDPDDGRAAQLAGQKGHVTPCIAGLIATSNPFLFTHMLALGAAYLGYDKYFGDGTSELLPFYGTRTLLSTLSPLDTPRLLDSMAAADRLSPKRSILSRFSRRKRSLDAPAPEPSGWDQKRKSRLPLGSLRLVLDILDRHLEALTTYVQQQIEIFRQAGVPLEASVTMTHNLNRLHVTRCQSRNNQMVIPCRWKDTTFFEELSNETNPGLTDEEQLEKRVKFHKLENAFNTVTGLGALEAMLDEDSVLLGGPAEESVARLYSDFHLGAAMNNWYFYDALNINKMLSRFQKVGTKVLKQYGLENLMNLATSHQAGSTASWDRTDIDTKLAKHHHYGSALRVRLYIMALLPQFTPHREGILSPVDFIREAFAGERSYAMSTARLKPLLSDDLVILGVPKGFSFLWLFEFLLEEDSPNALVAKRRALKRIPNWTKRLFSHSRSIPMLFRQFYKALNAGVFAKARRRTLDRSKTLLSRQLPEGWRDIVMDAFAFTAHSAALMQVVNYHSLFRDRTLNDLQEASYLATPPAFSIEDQSVMKRCDEQIYEWSRFGFSPDVLEADLHNETFKGKWENLRLETMPTPDTHQWWRRLHRAILDSLEIYQAHERHLKGMSDNLYTLVEDTIKNLQDGSSRDDTIFFGRIARGARESVGQKMWRGVKTFFLDLVRDVPGSDHAVWFGVGFNFPRIFQILRKMKEIALHAAGDQGSAILLDEAFVELVQETVAVRAQTYRRQPPTTLRNIGVIGLRPDYANLDTEQRSMEYQLSMCADHCVSLWVQILGFIYPYVLNPSLLTDYEKSFGTGHAIKKLDDPSYVNSFRYIFANDASLNFFEHNTPQDTRKALVSLKSGQAFMYANMMRFAGIAFEQLSMPYLAVSLQRQAPFMGQMVKDWVAKRSRSRKLAIVSVLSLGLIFAYTLLSALDIAQFLTDSGMKAIEDCSWNPIMQQMACVVVAGSGSLVAPTFAALSDVFKVGLYSGIGSTLIAASVVGNAYMIIRSQSRTILRTEMAIKNVAVKLWKQMRKYFSWVTRFTKRRKAILSTMMARATALAKNKKPRSETAATMTRSGDSVMDMLLQGVSPATPQRAQDGSR</sequence>
<feature type="signal peptide" evidence="2">
    <location>
        <begin position="1"/>
        <end position="20"/>
    </location>
</feature>
<feature type="chain" id="PRO_0000422340" description="Rhoptry neck protein 2-like protein 2">
    <location>
        <begin position="21"/>
        <end position="1167"/>
    </location>
</feature>
<feature type="topological domain" description="Cytoplasmic" evidence="2">
    <location>
        <begin position="21"/>
        <end position="977"/>
    </location>
</feature>
<feature type="transmembrane region" description="Helical" evidence="2">
    <location>
        <begin position="978"/>
        <end position="998"/>
    </location>
</feature>
<feature type="topological domain" description="Extracellular" evidence="2">
    <location>
        <begin position="999"/>
        <end position="1167"/>
    </location>
</feature>
<feature type="region of interest" description="Disordered" evidence="3">
    <location>
        <begin position="55"/>
        <end position="94"/>
    </location>
</feature>
<feature type="compositionally biased region" description="Basic and acidic residues" evidence="3">
    <location>
        <begin position="68"/>
        <end position="77"/>
    </location>
</feature>
<feature type="disulfide bond" evidence="1">
    <location>
        <begin position="1015"/>
        <end position="1026"/>
    </location>
</feature>
<feature type="helix" evidence="7">
    <location>
        <begin position="1001"/>
        <end position="1005"/>
    </location>
</feature>
<feature type="turn" evidence="7">
    <location>
        <begin position="1006"/>
        <end position="1008"/>
    </location>
</feature>
<feature type="strand" evidence="7">
    <location>
        <begin position="1014"/>
        <end position="1018"/>
    </location>
</feature>
<feature type="turn" evidence="7">
    <location>
        <begin position="1019"/>
        <end position="1022"/>
    </location>
</feature>
<feature type="strand" evidence="7">
    <location>
        <begin position="1023"/>
        <end position="1027"/>
    </location>
</feature>
<comment type="function">
    <text evidence="1">May play a role in host cell invasion.</text>
</comment>
<comment type="subcellular location">
    <subcellularLocation>
        <location evidence="1">Secreted</location>
    </subcellularLocation>
    <subcellularLocation>
        <location evidence="1">Host cell membrane</location>
        <topology evidence="6">Single-pass type I membrane protein</topology>
        <orientation evidence="1">Cytoplasmic side</orientation>
    </subcellularLocation>
    <text evidence="1">Initially localizes to rhoptries, specialized secretory organelles of apicomplexan parasites important for host cell invasion. Upon host invasion by tachyzoites, the protein is injected into the host cell, where it spans the host cell membrane (By similarity).</text>
</comment>
<comment type="induction">
    <text evidence="4 5">Readily detected in oocysts (at protein level). Specifically up-regulated in sporozoites, but not in tachyzoites and bradyzoites.</text>
</comment>
<comment type="similarity">
    <text evidence="6">Belongs to the apicomplexan parasites RON2 family.</text>
</comment>
<accession>B6KLP1</accession>
<accession>S8G7M8</accession>
<evidence type="ECO:0000250" key="1"/>
<evidence type="ECO:0000255" key="2"/>
<evidence type="ECO:0000256" key="3">
    <source>
        <dbReference type="SAM" id="MobiDB-lite"/>
    </source>
</evidence>
<evidence type="ECO:0000269" key="4">
    <source>
    </source>
</evidence>
<evidence type="ECO:0000269" key="5">
    <source>
    </source>
</evidence>
<evidence type="ECO:0000305" key="6"/>
<evidence type="ECO:0007829" key="7">
    <source>
        <dbReference type="PDB" id="3ZLD"/>
    </source>
</evidence>
<name>RON22_TOXGM</name>
<organism>
    <name type="scientific">Toxoplasma gondii (strain ATCC 50611 / Me49)</name>
    <dbReference type="NCBI Taxonomy" id="508771"/>
    <lineage>
        <taxon>Eukaryota</taxon>
        <taxon>Sar</taxon>
        <taxon>Alveolata</taxon>
        <taxon>Apicomplexa</taxon>
        <taxon>Conoidasida</taxon>
        <taxon>Coccidia</taxon>
        <taxon>Eucoccidiorida</taxon>
        <taxon>Eimeriorina</taxon>
        <taxon>Sarcocystidae</taxon>
        <taxon>Toxoplasma</taxon>
    </lineage>
</organism>